<comment type="function">
    <text>2-hydroxymuconic acid semialdehyde can be converted to 2-hydroxypent-2,4-dienoate either directly by the action of 2-hydroxymuconic semialdehyde hydrolase (HMSH) or by the action of three sequential enzymes, the first of which is HMSD.</text>
</comment>
<comment type="catalytic activity">
    <reaction>
        <text>(2Z,4E)-2-hydroxy-6-oxohexa-2,4-dienoate + NAD(+) + H2O = (2Z,4E)-2-hydroxyhexa-2,4-dienedioate + NADH + 2 H(+)</text>
        <dbReference type="Rhea" id="RHEA:34219"/>
        <dbReference type="ChEBI" id="CHEBI:15377"/>
        <dbReference type="ChEBI" id="CHEBI:15378"/>
        <dbReference type="ChEBI" id="CHEBI:28080"/>
        <dbReference type="ChEBI" id="CHEBI:57540"/>
        <dbReference type="ChEBI" id="CHEBI:57945"/>
        <dbReference type="ChEBI" id="CHEBI:71198"/>
        <dbReference type="EC" id="1.2.1.85"/>
    </reaction>
</comment>
<comment type="pathway">
    <text>Aromatic compound metabolism; benzoate degradation via hydroxylation.</text>
</comment>
<comment type="similarity">
    <text evidence="2">Belongs to the aldehyde dehydrogenase family.</text>
</comment>
<keyword id="KW-0058">Aromatic hydrocarbons catabolism</keyword>
<keyword id="KW-0520">NAD</keyword>
<keyword id="KW-0560">Oxidoreductase</keyword>
<keyword id="KW-0614">Plasmid</keyword>
<feature type="chain" id="PRO_0000056588" description="2-hydroxymuconic semialdehyde dehydrogenase">
    <location>
        <begin position="1"/>
        <end position="486"/>
    </location>
</feature>
<feature type="active site" evidence="1">
    <location>
        <position position="254"/>
    </location>
</feature>
<feature type="active site" evidence="1">
    <location>
        <position position="288"/>
    </location>
</feature>
<dbReference type="EC" id="1.2.1.85"/>
<dbReference type="EMBL" id="X52805">
    <property type="protein sequence ID" value="CAA36992.1"/>
    <property type="molecule type" value="Genomic_DNA"/>
</dbReference>
<dbReference type="SMR" id="P19059"/>
<dbReference type="UniPathway" id="UPA00156"/>
<dbReference type="GO" id="GO:0016620">
    <property type="term" value="F:oxidoreductase activity, acting on the aldehyde or oxo group of donors, NAD or NADP as acceptor"/>
    <property type="evidence" value="ECO:0007669"/>
    <property type="project" value="InterPro"/>
</dbReference>
<dbReference type="GO" id="GO:0043640">
    <property type="term" value="P:benzoate catabolic process via hydroxylation"/>
    <property type="evidence" value="ECO:0007669"/>
    <property type="project" value="UniProtKB-UniPathway"/>
</dbReference>
<dbReference type="CDD" id="cd07093">
    <property type="entry name" value="ALDH_F8_HMSADH"/>
    <property type="match status" value="1"/>
</dbReference>
<dbReference type="FunFam" id="3.40.309.10:FF:000012">
    <property type="entry name" value="Betaine aldehyde dehydrogenase"/>
    <property type="match status" value="1"/>
</dbReference>
<dbReference type="FunFam" id="3.40.605.10:FF:000007">
    <property type="entry name" value="NAD/NADP-dependent betaine aldehyde dehydrogenase"/>
    <property type="match status" value="1"/>
</dbReference>
<dbReference type="Gene3D" id="3.40.605.10">
    <property type="entry name" value="Aldehyde Dehydrogenase, Chain A, domain 1"/>
    <property type="match status" value="1"/>
</dbReference>
<dbReference type="Gene3D" id="3.40.309.10">
    <property type="entry name" value="Aldehyde Dehydrogenase, Chain A, domain 2"/>
    <property type="match status" value="1"/>
</dbReference>
<dbReference type="InterPro" id="IPR016161">
    <property type="entry name" value="Ald_DH/histidinol_DH"/>
</dbReference>
<dbReference type="InterPro" id="IPR016163">
    <property type="entry name" value="Ald_DH_C"/>
</dbReference>
<dbReference type="InterPro" id="IPR016160">
    <property type="entry name" value="Ald_DH_CS_CYS"/>
</dbReference>
<dbReference type="InterPro" id="IPR029510">
    <property type="entry name" value="Ald_DH_CS_GLU"/>
</dbReference>
<dbReference type="InterPro" id="IPR016162">
    <property type="entry name" value="Ald_DH_N"/>
</dbReference>
<dbReference type="InterPro" id="IPR015590">
    <property type="entry name" value="Aldehyde_DH_dom"/>
</dbReference>
<dbReference type="InterPro" id="IPR017628">
    <property type="entry name" value="OHmuconic_semiald_DH"/>
</dbReference>
<dbReference type="NCBIfam" id="TIGR03216">
    <property type="entry name" value="OH_muco_semi_DH"/>
    <property type="match status" value="1"/>
</dbReference>
<dbReference type="PANTHER" id="PTHR43720">
    <property type="entry name" value="2-AMINOMUCONIC SEMIALDEHYDE DEHYDROGENASE"/>
    <property type="match status" value="1"/>
</dbReference>
<dbReference type="PANTHER" id="PTHR43720:SF2">
    <property type="entry name" value="2-AMINOMUCONIC SEMIALDEHYDE DEHYDROGENASE"/>
    <property type="match status" value="1"/>
</dbReference>
<dbReference type="Pfam" id="PF00171">
    <property type="entry name" value="Aldedh"/>
    <property type="match status" value="1"/>
</dbReference>
<dbReference type="SUPFAM" id="SSF53720">
    <property type="entry name" value="ALDH-like"/>
    <property type="match status" value="1"/>
</dbReference>
<dbReference type="PROSITE" id="PS00070">
    <property type="entry name" value="ALDEHYDE_DEHYDR_CYS"/>
    <property type="match status" value="1"/>
</dbReference>
<dbReference type="PROSITE" id="PS00687">
    <property type="entry name" value="ALDEHYDE_DEHYDR_GLU"/>
    <property type="match status" value="1"/>
</dbReference>
<proteinExistence type="inferred from homology"/>
<geneLocation type="plasmid">
    <name>pVI150</name>
</geneLocation>
<sequence length="486" mass="51683">MKEIKHFINGAFVGSASGRTFEDVNPANGQVIARVHEAGRAEVDAAVQAARAALKGPWGKMSVSERAEILHRVADGITARFDEFLEAECLDTGKPKSLASHIDIPRGAANFKVFADLLKNVATEAFEMATPDGSGAINYAVRRPKGVIGVISPWNLPLLLMTWKVGPALACGNTVVVKPSEETPLTTALLGEVMQAAGVPAGVYNVVHGFGPDSAGAFLTEHPDVNAITFTGETRTGEAIMRAAAKGVRPVSFELGGKNAGIVFADCDLDKAIEGSMRSVFANGGQVCLGTERLYVERPIFDEFVARLKAGAESLVIGTPDDPQANFGPLISLQHREKVLSYYQKAVDEGATVVTGGGVPEMPAELAGGAWVQPTIWTGLADGAAVVTEEIFGPCCHIRPFDREEEAVELANSLPYGLAATIWTENTSRAHRVAGQLEAGIVWVNSWFLRDLRTAFGGSKQSGIGREGGVHSLEFYTELKNICVKL</sequence>
<evidence type="ECO:0000250" key="1"/>
<evidence type="ECO:0000305" key="2"/>
<organism>
    <name type="scientific">Pseudomonas sp. (strain CF600)</name>
    <dbReference type="NCBI Taxonomy" id="79676"/>
    <lineage>
        <taxon>Bacteria</taxon>
        <taxon>Pseudomonadati</taxon>
        <taxon>Pseudomonadota</taxon>
    </lineage>
</organism>
<reference key="1">
    <citation type="journal article" date="1990" name="Biochim. Biophys. Acta">
        <title>Nucleotide sequences of the meta-cleavage pathway enzymes 2-hydroxymuconic semialdehyde dehydrogenase and 2-hydroxymuconic semialdehyde hydrolase from Pseudomonas CF600.</title>
        <authorList>
            <person name="Nordlund I."/>
            <person name="Shingler V."/>
        </authorList>
    </citation>
    <scope>NUCLEOTIDE SEQUENCE [GENOMIC DNA]</scope>
</reference>
<protein>
    <recommendedName>
        <fullName>2-hydroxymuconic semialdehyde dehydrogenase</fullName>
        <shortName>HMSD</shortName>
        <ecNumber>1.2.1.85</ecNumber>
    </recommendedName>
</protein>
<accession>P19059</accession>
<name>DMPC_PSEUF</name>
<gene>
    <name type="primary">dmpC</name>
</gene>